<protein>
    <recommendedName>
        <fullName evidence="1">Serine--tRNA ligase</fullName>
        <ecNumber evidence="1">6.1.1.11</ecNumber>
    </recommendedName>
    <alternativeName>
        <fullName evidence="1">Seryl-tRNA synthetase</fullName>
        <shortName evidence="1">SerRS</shortName>
    </alternativeName>
    <alternativeName>
        <fullName evidence="1">Seryl-tRNA(Ser/Sec) synthetase</fullName>
    </alternativeName>
</protein>
<accession>P0DG56</accession>
<accession>Q8K635</accession>
<name>SYS_STRP3</name>
<proteinExistence type="inferred from homology"/>
<comment type="function">
    <text evidence="1">Catalyzes the attachment of serine to tRNA(Ser). Is also able to aminoacylate tRNA(Sec) with serine, to form the misacylated tRNA L-seryl-tRNA(Sec), which will be further converted into selenocysteinyl-tRNA(Sec).</text>
</comment>
<comment type="catalytic activity">
    <reaction evidence="1">
        <text>tRNA(Ser) + L-serine + ATP = L-seryl-tRNA(Ser) + AMP + diphosphate + H(+)</text>
        <dbReference type="Rhea" id="RHEA:12292"/>
        <dbReference type="Rhea" id="RHEA-COMP:9669"/>
        <dbReference type="Rhea" id="RHEA-COMP:9703"/>
        <dbReference type="ChEBI" id="CHEBI:15378"/>
        <dbReference type="ChEBI" id="CHEBI:30616"/>
        <dbReference type="ChEBI" id="CHEBI:33019"/>
        <dbReference type="ChEBI" id="CHEBI:33384"/>
        <dbReference type="ChEBI" id="CHEBI:78442"/>
        <dbReference type="ChEBI" id="CHEBI:78533"/>
        <dbReference type="ChEBI" id="CHEBI:456215"/>
        <dbReference type="EC" id="6.1.1.11"/>
    </reaction>
</comment>
<comment type="catalytic activity">
    <reaction evidence="1">
        <text>tRNA(Sec) + L-serine + ATP = L-seryl-tRNA(Sec) + AMP + diphosphate + H(+)</text>
        <dbReference type="Rhea" id="RHEA:42580"/>
        <dbReference type="Rhea" id="RHEA-COMP:9742"/>
        <dbReference type="Rhea" id="RHEA-COMP:10128"/>
        <dbReference type="ChEBI" id="CHEBI:15378"/>
        <dbReference type="ChEBI" id="CHEBI:30616"/>
        <dbReference type="ChEBI" id="CHEBI:33019"/>
        <dbReference type="ChEBI" id="CHEBI:33384"/>
        <dbReference type="ChEBI" id="CHEBI:78442"/>
        <dbReference type="ChEBI" id="CHEBI:78533"/>
        <dbReference type="ChEBI" id="CHEBI:456215"/>
        <dbReference type="EC" id="6.1.1.11"/>
    </reaction>
</comment>
<comment type="pathway">
    <text evidence="1">Aminoacyl-tRNA biosynthesis; selenocysteinyl-tRNA(Sec) biosynthesis; L-seryl-tRNA(Sec) from L-serine and tRNA(Sec): step 1/1.</text>
</comment>
<comment type="subunit">
    <text evidence="1">Homodimer. The tRNA molecule binds across the dimer.</text>
</comment>
<comment type="subcellular location">
    <subcellularLocation>
        <location evidence="1">Cytoplasm</location>
    </subcellularLocation>
</comment>
<comment type="domain">
    <text evidence="1">Consists of two distinct domains, a catalytic core and a N-terminal extension that is involved in tRNA binding.</text>
</comment>
<comment type="similarity">
    <text evidence="1">Belongs to the class-II aminoacyl-tRNA synthetase family. Type-1 seryl-tRNA synthetase subfamily.</text>
</comment>
<dbReference type="EC" id="6.1.1.11" evidence="1"/>
<dbReference type="EMBL" id="AE014074">
    <property type="protein sequence ID" value="AAM80123.1"/>
    <property type="molecule type" value="Genomic_DNA"/>
</dbReference>
<dbReference type="RefSeq" id="WP_011054935.1">
    <property type="nucleotide sequence ID" value="NC_004070.1"/>
</dbReference>
<dbReference type="SMR" id="P0DG56"/>
<dbReference type="KEGG" id="spg:SpyM3_1516"/>
<dbReference type="HOGENOM" id="CLU_023797_1_1_9"/>
<dbReference type="UniPathway" id="UPA00906">
    <property type="reaction ID" value="UER00895"/>
</dbReference>
<dbReference type="Proteomes" id="UP000000564">
    <property type="component" value="Chromosome"/>
</dbReference>
<dbReference type="GO" id="GO:0005737">
    <property type="term" value="C:cytoplasm"/>
    <property type="evidence" value="ECO:0007669"/>
    <property type="project" value="UniProtKB-SubCell"/>
</dbReference>
<dbReference type="GO" id="GO:0005524">
    <property type="term" value="F:ATP binding"/>
    <property type="evidence" value="ECO:0007669"/>
    <property type="project" value="UniProtKB-UniRule"/>
</dbReference>
<dbReference type="GO" id="GO:0140096">
    <property type="term" value="F:catalytic activity, acting on a protein"/>
    <property type="evidence" value="ECO:0007669"/>
    <property type="project" value="UniProtKB-ARBA"/>
</dbReference>
<dbReference type="GO" id="GO:0004828">
    <property type="term" value="F:serine-tRNA ligase activity"/>
    <property type="evidence" value="ECO:0007669"/>
    <property type="project" value="UniProtKB-UniRule"/>
</dbReference>
<dbReference type="GO" id="GO:0016740">
    <property type="term" value="F:transferase activity"/>
    <property type="evidence" value="ECO:0007669"/>
    <property type="project" value="UniProtKB-ARBA"/>
</dbReference>
<dbReference type="GO" id="GO:0016260">
    <property type="term" value="P:selenocysteine biosynthetic process"/>
    <property type="evidence" value="ECO:0007669"/>
    <property type="project" value="UniProtKB-UniRule"/>
</dbReference>
<dbReference type="GO" id="GO:0006434">
    <property type="term" value="P:seryl-tRNA aminoacylation"/>
    <property type="evidence" value="ECO:0007669"/>
    <property type="project" value="UniProtKB-UniRule"/>
</dbReference>
<dbReference type="CDD" id="cd00770">
    <property type="entry name" value="SerRS_core"/>
    <property type="match status" value="1"/>
</dbReference>
<dbReference type="Gene3D" id="3.30.930.10">
    <property type="entry name" value="Bira Bifunctional Protein, Domain 2"/>
    <property type="match status" value="1"/>
</dbReference>
<dbReference type="Gene3D" id="1.10.287.40">
    <property type="entry name" value="Serine-tRNA synthetase, tRNA binding domain"/>
    <property type="match status" value="1"/>
</dbReference>
<dbReference type="HAMAP" id="MF_00176">
    <property type="entry name" value="Ser_tRNA_synth_type1"/>
    <property type="match status" value="1"/>
</dbReference>
<dbReference type="InterPro" id="IPR002314">
    <property type="entry name" value="aa-tRNA-synt_IIb"/>
</dbReference>
<dbReference type="InterPro" id="IPR006195">
    <property type="entry name" value="aa-tRNA-synth_II"/>
</dbReference>
<dbReference type="InterPro" id="IPR045864">
    <property type="entry name" value="aa-tRNA-synth_II/BPL/LPL"/>
</dbReference>
<dbReference type="InterPro" id="IPR002317">
    <property type="entry name" value="Ser-tRNA-ligase_type_1"/>
</dbReference>
<dbReference type="InterPro" id="IPR015866">
    <property type="entry name" value="Ser-tRNA-synth_1_N"/>
</dbReference>
<dbReference type="InterPro" id="IPR042103">
    <property type="entry name" value="SerRS_1_N_sf"/>
</dbReference>
<dbReference type="InterPro" id="IPR033729">
    <property type="entry name" value="SerRS_core"/>
</dbReference>
<dbReference type="InterPro" id="IPR010978">
    <property type="entry name" value="tRNA-bd_arm"/>
</dbReference>
<dbReference type="NCBIfam" id="TIGR00414">
    <property type="entry name" value="serS"/>
    <property type="match status" value="1"/>
</dbReference>
<dbReference type="PANTHER" id="PTHR43697:SF1">
    <property type="entry name" value="SERINE--TRNA LIGASE"/>
    <property type="match status" value="1"/>
</dbReference>
<dbReference type="PANTHER" id="PTHR43697">
    <property type="entry name" value="SERYL-TRNA SYNTHETASE"/>
    <property type="match status" value="1"/>
</dbReference>
<dbReference type="Pfam" id="PF02403">
    <property type="entry name" value="Seryl_tRNA_N"/>
    <property type="match status" value="1"/>
</dbReference>
<dbReference type="Pfam" id="PF00587">
    <property type="entry name" value="tRNA-synt_2b"/>
    <property type="match status" value="1"/>
</dbReference>
<dbReference type="PIRSF" id="PIRSF001529">
    <property type="entry name" value="Ser-tRNA-synth_IIa"/>
    <property type="match status" value="1"/>
</dbReference>
<dbReference type="PRINTS" id="PR00981">
    <property type="entry name" value="TRNASYNTHSER"/>
</dbReference>
<dbReference type="SUPFAM" id="SSF55681">
    <property type="entry name" value="Class II aaRS and biotin synthetases"/>
    <property type="match status" value="1"/>
</dbReference>
<dbReference type="SUPFAM" id="SSF46589">
    <property type="entry name" value="tRNA-binding arm"/>
    <property type="match status" value="1"/>
</dbReference>
<dbReference type="PROSITE" id="PS50862">
    <property type="entry name" value="AA_TRNA_LIGASE_II"/>
    <property type="match status" value="1"/>
</dbReference>
<feature type="chain" id="PRO_0000122136" description="Serine--tRNA ligase">
    <location>
        <begin position="1"/>
        <end position="425"/>
    </location>
</feature>
<feature type="binding site" evidence="1">
    <location>
        <begin position="230"/>
        <end position="232"/>
    </location>
    <ligand>
        <name>L-serine</name>
        <dbReference type="ChEBI" id="CHEBI:33384"/>
    </ligand>
</feature>
<feature type="binding site" evidence="1">
    <location>
        <begin position="261"/>
        <end position="263"/>
    </location>
    <ligand>
        <name>ATP</name>
        <dbReference type="ChEBI" id="CHEBI:30616"/>
    </ligand>
</feature>
<feature type="binding site" evidence="1">
    <location>
        <position position="284"/>
    </location>
    <ligand>
        <name>L-serine</name>
        <dbReference type="ChEBI" id="CHEBI:33384"/>
    </ligand>
</feature>
<feature type="binding site" evidence="1">
    <location>
        <begin position="348"/>
        <end position="351"/>
    </location>
    <ligand>
        <name>ATP</name>
        <dbReference type="ChEBI" id="CHEBI:30616"/>
    </ligand>
</feature>
<feature type="binding site" evidence="1">
    <location>
        <position position="384"/>
    </location>
    <ligand>
        <name>L-serine</name>
        <dbReference type="ChEBI" id="CHEBI:33384"/>
    </ligand>
</feature>
<sequence length="425" mass="48109">MLDLKRIRTDFDTVAAKLKNRGVSEDTLTHLKELDEKRRTLLVQSEELKAGRNIASAAIAQAKRQKEDATQQIADMQKVSADIKTIDNQLVAIDQQVADIITVLPNTPHDSVPVGADEEDNVEIRRWGTPRDFDFEVKAHWDLGEDLDILDWERGAKVTGARFLFYKNLGARLERALYNFMLDEHIKEGYQEIITPYMVNHDSMFGTGQYPKFKEDTFELADTNFVLIPTAEVPLTNYYRGEILDGKELPIYFTAMSPSFRSEAGSAGRDTRGLIRLHQFHKVEMVKFAKPEESYQELEKMTANAENILQKLGLPYRVISLCTGDMGFSAAKTYDLEVWIPAQNTYREISSCSNTEDFQARRAQIRYRDEADGKVKLLHTLNGSGLAVGRTVAAILENYQNEDGSVTIPEVLRPYMGGETVISPK</sequence>
<keyword id="KW-0030">Aminoacyl-tRNA synthetase</keyword>
<keyword id="KW-0067">ATP-binding</keyword>
<keyword id="KW-0963">Cytoplasm</keyword>
<keyword id="KW-0436">Ligase</keyword>
<keyword id="KW-0547">Nucleotide-binding</keyword>
<keyword id="KW-0648">Protein biosynthesis</keyword>
<evidence type="ECO:0000255" key="1">
    <source>
        <dbReference type="HAMAP-Rule" id="MF_00176"/>
    </source>
</evidence>
<reference key="1">
    <citation type="journal article" date="2002" name="Proc. Natl. Acad. Sci. U.S.A.">
        <title>Genome sequence of a serotype M3 strain of group A Streptococcus: phage-encoded toxins, the high-virulence phenotype, and clone emergence.</title>
        <authorList>
            <person name="Beres S.B."/>
            <person name="Sylva G.L."/>
            <person name="Barbian K.D."/>
            <person name="Lei B."/>
            <person name="Hoff J.S."/>
            <person name="Mammarella N.D."/>
            <person name="Liu M.-Y."/>
            <person name="Smoot J.C."/>
            <person name="Porcella S.F."/>
            <person name="Parkins L.D."/>
            <person name="Campbell D.S."/>
            <person name="Smith T.M."/>
            <person name="McCormick J.K."/>
            <person name="Leung D.Y.M."/>
            <person name="Schlievert P.M."/>
            <person name="Musser J.M."/>
        </authorList>
    </citation>
    <scope>NUCLEOTIDE SEQUENCE [LARGE SCALE GENOMIC DNA]</scope>
    <source>
        <strain>ATCC BAA-595 / MGAS315</strain>
    </source>
</reference>
<organism>
    <name type="scientific">Streptococcus pyogenes serotype M3 (strain ATCC BAA-595 / MGAS315)</name>
    <dbReference type="NCBI Taxonomy" id="198466"/>
    <lineage>
        <taxon>Bacteria</taxon>
        <taxon>Bacillati</taxon>
        <taxon>Bacillota</taxon>
        <taxon>Bacilli</taxon>
        <taxon>Lactobacillales</taxon>
        <taxon>Streptococcaceae</taxon>
        <taxon>Streptococcus</taxon>
    </lineage>
</organism>
<gene>
    <name evidence="1" type="primary">serS</name>
    <name type="ordered locus">SpyM3_1516</name>
</gene>